<proteinExistence type="inferred from homology"/>
<dbReference type="EC" id="2.4.1.182" evidence="1"/>
<dbReference type="EMBL" id="AE006468">
    <property type="protein sequence ID" value="AAL19193.1"/>
    <property type="molecule type" value="Genomic_DNA"/>
</dbReference>
<dbReference type="RefSeq" id="NP_459234.1">
    <property type="nucleotide sequence ID" value="NC_003197.2"/>
</dbReference>
<dbReference type="RefSeq" id="WP_000741212.1">
    <property type="nucleotide sequence ID" value="NC_003197.2"/>
</dbReference>
<dbReference type="SMR" id="Q8ZRN9"/>
<dbReference type="STRING" id="99287.STM0229"/>
<dbReference type="CAZy" id="GT19">
    <property type="family name" value="Glycosyltransferase Family 19"/>
</dbReference>
<dbReference type="PaxDb" id="99287-STM0229"/>
<dbReference type="GeneID" id="1251747"/>
<dbReference type="KEGG" id="stm:STM0229"/>
<dbReference type="PATRIC" id="fig|99287.12.peg.242"/>
<dbReference type="HOGENOM" id="CLU_036577_3_0_6"/>
<dbReference type="OMA" id="YVILPFE"/>
<dbReference type="PhylomeDB" id="Q8ZRN9"/>
<dbReference type="BioCyc" id="SENT99287:STM0229-MONOMER"/>
<dbReference type="UniPathway" id="UPA00359">
    <property type="reaction ID" value="UER00481"/>
</dbReference>
<dbReference type="Proteomes" id="UP000001014">
    <property type="component" value="Chromosome"/>
</dbReference>
<dbReference type="GO" id="GO:0016020">
    <property type="term" value="C:membrane"/>
    <property type="evidence" value="ECO:0007669"/>
    <property type="project" value="GOC"/>
</dbReference>
<dbReference type="GO" id="GO:0008915">
    <property type="term" value="F:lipid-A-disaccharide synthase activity"/>
    <property type="evidence" value="ECO:0007669"/>
    <property type="project" value="UniProtKB-UniRule"/>
</dbReference>
<dbReference type="GO" id="GO:0005543">
    <property type="term" value="F:phospholipid binding"/>
    <property type="evidence" value="ECO:0000318"/>
    <property type="project" value="GO_Central"/>
</dbReference>
<dbReference type="GO" id="GO:0009245">
    <property type="term" value="P:lipid A biosynthetic process"/>
    <property type="evidence" value="ECO:0000318"/>
    <property type="project" value="GO_Central"/>
</dbReference>
<dbReference type="CDD" id="cd01635">
    <property type="entry name" value="Glycosyltransferase_GTB-type"/>
    <property type="match status" value="1"/>
</dbReference>
<dbReference type="HAMAP" id="MF_00392">
    <property type="entry name" value="LpxB"/>
    <property type="match status" value="1"/>
</dbReference>
<dbReference type="InterPro" id="IPR003835">
    <property type="entry name" value="Glyco_trans_19"/>
</dbReference>
<dbReference type="NCBIfam" id="TIGR00215">
    <property type="entry name" value="lpxB"/>
    <property type="match status" value="1"/>
</dbReference>
<dbReference type="PANTHER" id="PTHR30372">
    <property type="entry name" value="LIPID-A-DISACCHARIDE SYNTHASE"/>
    <property type="match status" value="1"/>
</dbReference>
<dbReference type="PANTHER" id="PTHR30372:SF4">
    <property type="entry name" value="LIPID-A-DISACCHARIDE SYNTHASE, MITOCHONDRIAL-RELATED"/>
    <property type="match status" value="1"/>
</dbReference>
<dbReference type="Pfam" id="PF02684">
    <property type="entry name" value="LpxB"/>
    <property type="match status" value="1"/>
</dbReference>
<dbReference type="SUPFAM" id="SSF53756">
    <property type="entry name" value="UDP-Glycosyltransferase/glycogen phosphorylase"/>
    <property type="match status" value="1"/>
</dbReference>
<organism>
    <name type="scientific">Salmonella typhimurium (strain LT2 / SGSC1412 / ATCC 700720)</name>
    <dbReference type="NCBI Taxonomy" id="99287"/>
    <lineage>
        <taxon>Bacteria</taxon>
        <taxon>Pseudomonadati</taxon>
        <taxon>Pseudomonadota</taxon>
        <taxon>Gammaproteobacteria</taxon>
        <taxon>Enterobacterales</taxon>
        <taxon>Enterobacteriaceae</taxon>
        <taxon>Salmonella</taxon>
    </lineage>
</organism>
<comment type="function">
    <text evidence="1">Condensation of UDP-2,3-diacylglucosamine and 2,3-diacylglucosamine-1-phosphate to form lipid A disaccharide, a precursor of lipid A, a phosphorylated glycolipid that anchors the lipopolysaccharide to the outer membrane of the cell.</text>
</comment>
<comment type="catalytic activity">
    <reaction evidence="1">
        <text>2-N,3-O-bis[(3R)-3-hydroxytetradecanoyl]-alpha-D-glucosaminyl 1-phosphate + UDP-2-N,3-O-bis[(3R)-3-hydroxytetradecanoyl]-alpha-D-glucosamine = lipid A disaccharide (E. coli) + UDP + H(+)</text>
        <dbReference type="Rhea" id="RHEA:22668"/>
        <dbReference type="ChEBI" id="CHEBI:15378"/>
        <dbReference type="ChEBI" id="CHEBI:57957"/>
        <dbReference type="ChEBI" id="CHEBI:58223"/>
        <dbReference type="ChEBI" id="CHEBI:58466"/>
        <dbReference type="ChEBI" id="CHEBI:78847"/>
    </reaction>
</comment>
<comment type="catalytic activity">
    <reaction evidence="1">
        <text>a lipid X + a UDP-2-N,3-O-bis[(3R)-3-hydroxyacyl]-alpha-D-glucosamine = a lipid A disaccharide + UDP + H(+)</text>
        <dbReference type="Rhea" id="RHEA:67828"/>
        <dbReference type="ChEBI" id="CHEBI:15378"/>
        <dbReference type="ChEBI" id="CHEBI:58223"/>
        <dbReference type="ChEBI" id="CHEBI:137748"/>
        <dbReference type="ChEBI" id="CHEBI:176338"/>
        <dbReference type="ChEBI" id="CHEBI:176343"/>
        <dbReference type="EC" id="2.4.1.182"/>
    </reaction>
</comment>
<comment type="pathway">
    <text evidence="1">Glycolipid biosynthesis; lipid IV(A) biosynthesis; lipid IV(A) from (3R)-3-hydroxytetradecanoyl-[acyl-carrier-protein] and UDP-N-acetyl-alpha-D-glucosamine: step 5/6.</text>
</comment>
<comment type="similarity">
    <text evidence="1">Belongs to the LpxB family.</text>
</comment>
<evidence type="ECO:0000255" key="1">
    <source>
        <dbReference type="HAMAP-Rule" id="MF_00392"/>
    </source>
</evidence>
<keyword id="KW-0328">Glycosyltransferase</keyword>
<keyword id="KW-0441">Lipid A biosynthesis</keyword>
<keyword id="KW-0444">Lipid biosynthesis</keyword>
<keyword id="KW-0443">Lipid metabolism</keyword>
<keyword id="KW-1185">Reference proteome</keyword>
<keyword id="KW-0808">Transferase</keyword>
<accession>Q8ZRN9</accession>
<feature type="chain" id="PRO_0000190184" description="Lipid-A-disaccharide synthase">
    <location>
        <begin position="1"/>
        <end position="382"/>
    </location>
</feature>
<reference key="1">
    <citation type="journal article" date="2001" name="Nature">
        <title>Complete genome sequence of Salmonella enterica serovar Typhimurium LT2.</title>
        <authorList>
            <person name="McClelland M."/>
            <person name="Sanderson K.E."/>
            <person name="Spieth J."/>
            <person name="Clifton S.W."/>
            <person name="Latreille P."/>
            <person name="Courtney L."/>
            <person name="Porwollik S."/>
            <person name="Ali J."/>
            <person name="Dante M."/>
            <person name="Du F."/>
            <person name="Hou S."/>
            <person name="Layman D."/>
            <person name="Leonard S."/>
            <person name="Nguyen C."/>
            <person name="Scott K."/>
            <person name="Holmes A."/>
            <person name="Grewal N."/>
            <person name="Mulvaney E."/>
            <person name="Ryan E."/>
            <person name="Sun H."/>
            <person name="Florea L."/>
            <person name="Miller W."/>
            <person name="Stoneking T."/>
            <person name="Nhan M."/>
            <person name="Waterston R."/>
            <person name="Wilson R.K."/>
        </authorList>
    </citation>
    <scope>NUCLEOTIDE SEQUENCE [LARGE SCALE GENOMIC DNA]</scope>
    <source>
        <strain>LT2 / SGSC1412 / ATCC 700720</strain>
    </source>
</reference>
<gene>
    <name evidence="1" type="primary">lpxB</name>
    <name type="ordered locus">STM0229</name>
</gene>
<name>LPXB_SALTY</name>
<sequence>MAAQRPLTIALVAGETSGDILGAGLIRALKARVPNARFVGVAGPRMQAEGCEAWYEMEELAVMGIVEVLGRLRRLLHIRADLTRRFTELKPDVFVGIDAPDFNITLEGNLKKKGIKTIHYVSPSVWAWRQKRVFKIGRSTHMVLAFLPFEKAFYDKFNVPCRFIGHTMADAMPLDPDKNAARDVLGIPHDAHCLALLPGSRGAEVEMLSADFLKTAQLLRQRYPDLEVVVPLVNAKRREQFEKIKAEVAPDLAVHLLDGMAREAMIASDAALLASGTAALECMLAKCPMVVGYRMKPFTFWLAKRLVKTEYVSLPNLLAGRELVKELLQEECEPQKLAEALLPLLANGKTSHAMHDTFRELHQQIRCNADEQAADAVLELAQ</sequence>
<protein>
    <recommendedName>
        <fullName evidence="1">Lipid-A-disaccharide synthase</fullName>
        <ecNumber evidence="1">2.4.1.182</ecNumber>
    </recommendedName>
</protein>